<keyword id="KW-0007">Acetylation</keyword>
<keyword id="KW-0067">ATP-binding</keyword>
<keyword id="KW-0092">Biotin</keyword>
<keyword id="KW-0903">Direct protein sequencing</keyword>
<keyword id="KW-0312">Gluconeogenesis</keyword>
<keyword id="KW-0436">Ligase</keyword>
<keyword id="KW-0444">Lipid biosynthesis</keyword>
<keyword id="KW-0443">Lipid metabolism</keyword>
<keyword id="KW-0464">Manganese</keyword>
<keyword id="KW-0479">Metal-binding</keyword>
<keyword id="KW-0496">Mitochondrion</keyword>
<keyword id="KW-0511">Multifunctional enzyme</keyword>
<keyword id="KW-0547">Nucleotide-binding</keyword>
<keyword id="KW-0597">Phosphoprotein</keyword>
<keyword id="KW-0670">Pyruvate</keyword>
<keyword id="KW-1185">Reference proteome</keyword>
<keyword id="KW-0809">Transit peptide</keyword>
<protein>
    <recommendedName>
        <fullName>Pyruvate carboxylase, mitochondrial</fullName>
        <ecNumber evidence="2">6.4.1.1</ecNumber>
    </recommendedName>
    <alternativeName>
        <fullName>Pyruvic carboxylase</fullName>
        <shortName>PCB</shortName>
    </alternativeName>
</protein>
<name>PYC_RAT</name>
<proteinExistence type="evidence at protein level"/>
<comment type="function">
    <text evidence="2">Pyruvate carboxylase catalyzes a 2-step reaction, involving the ATP-dependent carboxylation of the covalently attached biotin in the first step and the transfer of the carboxyl group to pyruvate in the second. Catalyzes in a tissue specific manner, the initial reactions of glucose (liver, kidney) and lipid (adipose tissue, liver, brain) synthesis from pyruvate.</text>
</comment>
<comment type="catalytic activity">
    <reaction evidence="2">
        <text>hydrogencarbonate + pyruvate + ATP = oxaloacetate + ADP + phosphate + H(+)</text>
        <dbReference type="Rhea" id="RHEA:20844"/>
        <dbReference type="ChEBI" id="CHEBI:15361"/>
        <dbReference type="ChEBI" id="CHEBI:15378"/>
        <dbReference type="ChEBI" id="CHEBI:16452"/>
        <dbReference type="ChEBI" id="CHEBI:17544"/>
        <dbReference type="ChEBI" id="CHEBI:30616"/>
        <dbReference type="ChEBI" id="CHEBI:43474"/>
        <dbReference type="ChEBI" id="CHEBI:456216"/>
        <dbReference type="EC" id="6.4.1.1"/>
    </reaction>
    <physiologicalReaction direction="left-to-right" evidence="2">
        <dbReference type="Rhea" id="RHEA:20845"/>
    </physiologicalReaction>
</comment>
<comment type="cofactor">
    <cofactor evidence="2">
        <name>biotin</name>
        <dbReference type="ChEBI" id="CHEBI:57586"/>
    </cofactor>
</comment>
<comment type="cofactor">
    <cofactor evidence="2">
        <name>Mn(2+)</name>
        <dbReference type="ChEBI" id="CHEBI:29035"/>
    </cofactor>
    <text evidence="2">Binds 1 Mn(2+) ion per subunit.</text>
</comment>
<comment type="pathway">
    <text evidence="2">Carbohydrate biosynthesis; gluconeogenesis.</text>
</comment>
<comment type="subunit">
    <text evidence="2">Homotetramer. Interacts (via the biotin carboxylation domain) with SIRT4.</text>
</comment>
<comment type="subcellular location">
    <subcellularLocation>
        <location evidence="2">Mitochondrion matrix</location>
    </subcellularLocation>
</comment>
<comment type="PTM">
    <text evidence="3">Acetylation of Lys-748 might play a role in catalytic activity regulation.</text>
</comment>
<comment type="miscellaneous">
    <text>This enzyme performs an important anaplerotic function in replenishing citric acid cycle intermediates that exit the mitochondrion for consumption in various pathways.</text>
</comment>
<gene>
    <name type="primary">Pc</name>
</gene>
<accession>P52873</accession>
<accession>Q5RKM0</accession>
<accession>Q64555</accession>
<organism>
    <name type="scientific">Rattus norvegicus</name>
    <name type="common">Rat</name>
    <dbReference type="NCBI Taxonomy" id="10116"/>
    <lineage>
        <taxon>Eukaryota</taxon>
        <taxon>Metazoa</taxon>
        <taxon>Chordata</taxon>
        <taxon>Craniata</taxon>
        <taxon>Vertebrata</taxon>
        <taxon>Euteleostomi</taxon>
        <taxon>Mammalia</taxon>
        <taxon>Eutheria</taxon>
        <taxon>Euarchontoglires</taxon>
        <taxon>Glires</taxon>
        <taxon>Rodentia</taxon>
        <taxon>Myomorpha</taxon>
        <taxon>Muroidea</taxon>
        <taxon>Muridae</taxon>
        <taxon>Murinae</taxon>
        <taxon>Rattus</taxon>
    </lineage>
</organism>
<feature type="transit peptide" description="Mitochondrion" evidence="4">
    <location>
        <begin position="1"/>
        <end position="20"/>
    </location>
</feature>
<feature type="chain" id="PRO_0000002842" description="Pyruvate carboxylase, mitochondrial">
    <location>
        <begin position="21"/>
        <end position="1178"/>
    </location>
</feature>
<feature type="domain" description="Biotin carboxylation">
    <location>
        <begin position="36"/>
        <end position="486"/>
    </location>
</feature>
<feature type="domain" description="ATP-grasp" evidence="5">
    <location>
        <begin position="156"/>
        <end position="353"/>
    </location>
</feature>
<feature type="domain" description="Pyruvate carboxyltransferase" evidence="7">
    <location>
        <begin position="563"/>
        <end position="832"/>
    </location>
</feature>
<feature type="domain" description="Biotinyl-binding" evidence="6">
    <location>
        <begin position="1109"/>
        <end position="1178"/>
    </location>
</feature>
<feature type="active site" evidence="1">
    <location>
        <position position="328"/>
    </location>
</feature>
<feature type="binding site" evidence="1">
    <location>
        <position position="152"/>
    </location>
    <ligand>
        <name>ATP</name>
        <dbReference type="ChEBI" id="CHEBI:30616"/>
    </ligand>
</feature>
<feature type="binding site" evidence="1">
    <location>
        <position position="236"/>
    </location>
    <ligand>
        <name>ATP</name>
        <dbReference type="ChEBI" id="CHEBI:30616"/>
    </ligand>
</feature>
<feature type="binding site" evidence="1">
    <location>
        <position position="271"/>
    </location>
    <ligand>
        <name>ATP</name>
        <dbReference type="ChEBI" id="CHEBI:30616"/>
    </ligand>
</feature>
<feature type="binding site" evidence="1">
    <location>
        <begin position="571"/>
        <end position="575"/>
    </location>
    <ligand>
        <name>substrate</name>
    </ligand>
</feature>
<feature type="binding site" evidence="1">
    <location>
        <position position="572"/>
    </location>
    <ligand>
        <name>Mn(2+)</name>
        <dbReference type="ChEBI" id="CHEBI:29035"/>
    </ligand>
</feature>
<feature type="binding site" evidence="1">
    <location>
        <position position="644"/>
    </location>
    <ligand>
        <name>substrate</name>
    </ligand>
</feature>
<feature type="binding site" description="via carbamate group" evidence="1">
    <location>
        <position position="741"/>
    </location>
    <ligand>
        <name>Mn(2+)</name>
        <dbReference type="ChEBI" id="CHEBI:29035"/>
    </ligand>
</feature>
<feature type="binding site" evidence="1">
    <location>
        <position position="771"/>
    </location>
    <ligand>
        <name>Mn(2+)</name>
        <dbReference type="ChEBI" id="CHEBI:29035"/>
    </ligand>
</feature>
<feature type="binding site" evidence="1">
    <location>
        <position position="773"/>
    </location>
    <ligand>
        <name>Mn(2+)</name>
        <dbReference type="ChEBI" id="CHEBI:29035"/>
    </ligand>
</feature>
<feature type="binding site" evidence="1">
    <location>
        <position position="908"/>
    </location>
    <ligand>
        <name>substrate</name>
    </ligand>
</feature>
<feature type="modified residue" description="N6-acetyllysine" evidence="3">
    <location>
        <position position="35"/>
    </location>
</feature>
<feature type="modified residue" description="N6-acetyllysine" evidence="3">
    <location>
        <position position="39"/>
    </location>
</feature>
<feature type="modified residue" description="N6-acetyllysine; alternate" evidence="3">
    <location>
        <position position="79"/>
    </location>
</feature>
<feature type="modified residue" description="N6-succinyllysine; alternate" evidence="3">
    <location>
        <position position="79"/>
    </location>
</feature>
<feature type="modified residue" description="N6-acetyllysine" evidence="3">
    <location>
        <position position="148"/>
    </location>
</feature>
<feature type="modified residue" description="N6-acetyllysine" evidence="3">
    <location>
        <position position="152"/>
    </location>
</feature>
<feature type="modified residue" description="N6-acetyllysine" evidence="3">
    <location>
        <position position="241"/>
    </location>
</feature>
<feature type="modified residue" description="N6-acetyllysine" evidence="3">
    <location>
        <position position="297"/>
    </location>
</feature>
<feature type="modified residue" description="N6-acetyllysine" evidence="3">
    <location>
        <position position="316"/>
    </location>
</feature>
<feature type="modified residue" description="N6-acetyllysine" evidence="3">
    <location>
        <position position="319"/>
    </location>
</feature>
<feature type="modified residue" description="N6-acetyllysine" evidence="3">
    <location>
        <position position="434"/>
    </location>
</feature>
<feature type="modified residue" description="N6-succinyllysine" evidence="3">
    <location>
        <position position="442"/>
    </location>
</feature>
<feature type="modified residue" description="N6-acetyllysine" evidence="3">
    <location>
        <position position="589"/>
    </location>
</feature>
<feature type="modified residue" description="N6-acetyllysine" evidence="3">
    <location>
        <position position="661"/>
    </location>
</feature>
<feature type="modified residue" description="N6-acetyllysine" evidence="3">
    <location>
        <position position="717"/>
    </location>
</feature>
<feature type="modified residue" description="N6-carboxylysine" evidence="1">
    <location>
        <position position="741"/>
    </location>
</feature>
<feature type="modified residue" description="N6-acetyllysine" evidence="3">
    <location>
        <position position="748"/>
    </location>
</feature>
<feature type="modified residue" description="N6-acetyllysine" evidence="3">
    <location>
        <position position="892"/>
    </location>
</feature>
<feature type="modified residue" description="N6-acetyllysine" evidence="3">
    <location>
        <position position="969"/>
    </location>
</feature>
<feature type="modified residue" description="N6-acetyllysine; alternate" evidence="3">
    <location>
        <position position="988"/>
    </location>
</feature>
<feature type="modified residue" description="N6-succinyllysine; alternate" evidence="3">
    <location>
        <position position="988"/>
    </location>
</feature>
<feature type="modified residue" description="N6-acetyllysine" evidence="3">
    <location>
        <position position="992"/>
    </location>
</feature>
<feature type="modified residue" description="Phosphothreonine" evidence="9">
    <location>
        <position position="1003"/>
    </location>
</feature>
<feature type="modified residue" description="N6-acetyllysine" evidence="3">
    <location>
        <position position="1061"/>
    </location>
</feature>
<feature type="modified residue" description="N6-acetyllysine" evidence="2">
    <location>
        <position position="1090"/>
    </location>
</feature>
<feature type="modified residue" description="N6-acetyllysine" evidence="3">
    <location>
        <position position="1124"/>
    </location>
</feature>
<feature type="modified residue" description="N6-biotinyllysine" evidence="1 6">
    <location>
        <position position="1144"/>
    </location>
</feature>
<feature type="sequence conflict" description="In Ref. 4; AA sequence." evidence="8" ref="4">
    <original>TA</original>
    <variation>SG</variation>
    <location>
        <begin position="21"/>
        <end position="22"/>
    </location>
</feature>
<feature type="sequence conflict" description="In Ref. 4; AA sequence." evidence="8" ref="4">
    <original>SP</original>
    <variation>PL</variation>
    <location>
        <begin position="26"/>
        <end position="27"/>
    </location>
</feature>
<feature type="sequence conflict" description="In Ref. 4; AA sequence." evidence="8" ref="4">
    <original>RR</original>
    <variation>LL</variation>
    <location>
        <begin position="30"/>
        <end position="31"/>
    </location>
</feature>
<feature type="sequence conflict" description="In Ref. 4; AA sequence." evidence="8" ref="4">
    <original>K</original>
    <variation>P</variation>
    <location>
        <position position="35"/>
    </location>
</feature>
<feature type="sequence conflict" description="In Ref. 1; AAA96256." evidence="8" ref="1">
    <original>S</original>
    <variation>P</variation>
    <location>
        <position position="222"/>
    </location>
</feature>
<feature type="sequence conflict" description="In Ref. 1; AAA96256." evidence="8" ref="1">
    <original>I</original>
    <variation>D</variation>
    <location>
        <position position="866"/>
    </location>
</feature>
<feature type="sequence conflict" description="In Ref. 1; AAA96256." evidence="8" ref="1">
    <original>R</original>
    <variation>G</variation>
    <location>
        <position position="977"/>
    </location>
</feature>
<feature type="sequence conflict" description="In Ref. 4; AA sequence." evidence="8" ref="4">
    <original>Q</original>
    <variation>A</variation>
    <location>
        <position position="1135"/>
    </location>
</feature>
<feature type="sequence conflict" description="In Ref. 4; AA sequence." evidence="8" ref="4">
    <original>M</original>
    <variation>T</variation>
    <location>
        <position position="1153"/>
    </location>
</feature>
<reference key="1">
    <citation type="journal article" date="1995" name="Gene">
        <title>The sequence of the rat pyruvate carboxylase-encoding cDNA.</title>
        <authorList>
            <person name="Lehn D.A."/>
            <person name="Moran S.M."/>
            <person name="Macdonald M.J."/>
        </authorList>
    </citation>
    <scope>NUCLEOTIDE SEQUENCE [MRNA]</scope>
    <source>
        <tissue>Liver</tissue>
    </source>
</reference>
<reference key="2">
    <citation type="journal article" date="1996" name="Biochem. J.">
        <title>Cloning, sequencing and expression of rat liver pyruvate carboxylase.</title>
        <authorList>
            <person name="Jitrapakdee S."/>
            <person name="Booker G.W."/>
            <person name="Cassady A.I."/>
            <person name="Wallace J.C."/>
        </authorList>
    </citation>
    <scope>NUCLEOTIDE SEQUENCE [MRNA]</scope>
    <source>
        <strain>Wistar</strain>
        <tissue>Liver</tissue>
    </source>
</reference>
<reference key="3">
    <citation type="journal article" date="2004" name="Genome Res.">
        <title>The status, quality, and expansion of the NIH full-length cDNA project: the Mammalian Gene Collection (MGC).</title>
        <authorList>
            <consortium name="The MGC Project Team"/>
        </authorList>
    </citation>
    <scope>NUCLEOTIDE SEQUENCE [LARGE SCALE MRNA]</scope>
    <source>
        <tissue>Kidney</tissue>
    </source>
</reference>
<reference key="4">
    <citation type="journal article" date="1988" name="Arch. Biochem. Biophys.">
        <title>A rapid purification method for rat liver pyruvate carboxylase and amino acid sequence analyses of NH2-terminal and biotin peptide.</title>
        <authorList>
            <person name="Thampy K.G."/>
            <person name="Huang W.Y."/>
            <person name="Wakil S.J."/>
        </authorList>
    </citation>
    <scope>PROTEIN SEQUENCE OF 21-35; 1134-1137 AND 1139-1158</scope>
    <source>
        <tissue>Liver</tissue>
    </source>
</reference>
<reference key="5">
    <citation type="submission" date="2006-12" db="UniProtKB">
        <authorList>
            <person name="Lubec G."/>
            <person name="Afjehi-Sadat L."/>
        </authorList>
    </citation>
    <scope>PROTEIN SEQUENCE OF 244-263; 329-355; 407-428 AND 943-964</scope>
    <scope>IDENTIFICATION BY MASS SPECTROMETRY</scope>
    <source>
        <strain>Sprague-Dawley</strain>
        <tissue>Spinal cord</tissue>
    </source>
</reference>
<reference key="6">
    <citation type="journal article" date="2012" name="Nat. Commun.">
        <title>Quantitative maps of protein phosphorylation sites across 14 different rat organs and tissues.</title>
        <authorList>
            <person name="Lundby A."/>
            <person name="Secher A."/>
            <person name="Lage K."/>
            <person name="Nordsborg N.B."/>
            <person name="Dmytriyev A."/>
            <person name="Lundby C."/>
            <person name="Olsen J.V."/>
        </authorList>
    </citation>
    <scope>PHOSPHORYLATION [LARGE SCALE ANALYSIS] AT THR-1003</scope>
    <scope>IDENTIFICATION BY MASS SPECTROMETRY [LARGE SCALE ANALYSIS]</scope>
</reference>
<dbReference type="EC" id="6.4.1.1" evidence="2"/>
<dbReference type="EMBL" id="U32314">
    <property type="protein sequence ID" value="AAA96256.1"/>
    <property type="molecule type" value="mRNA"/>
</dbReference>
<dbReference type="EMBL" id="U36585">
    <property type="protein sequence ID" value="AAC52668.1"/>
    <property type="molecule type" value="mRNA"/>
</dbReference>
<dbReference type="EMBL" id="BC085680">
    <property type="protein sequence ID" value="AAH85680.1"/>
    <property type="molecule type" value="mRNA"/>
</dbReference>
<dbReference type="PIR" id="S68252">
    <property type="entry name" value="JC4391"/>
</dbReference>
<dbReference type="RefSeq" id="NP_036876.2">
    <property type="nucleotide sequence ID" value="NM_012744.2"/>
</dbReference>
<dbReference type="RefSeq" id="XP_006230754.1">
    <property type="nucleotide sequence ID" value="XM_006230692.5"/>
</dbReference>
<dbReference type="RefSeq" id="XP_006230755.1">
    <property type="nucleotide sequence ID" value="XM_006230693.2"/>
</dbReference>
<dbReference type="RefSeq" id="XP_006230756.1">
    <property type="nucleotide sequence ID" value="XM_006230694.3"/>
</dbReference>
<dbReference type="RefSeq" id="XP_063137350.1">
    <property type="nucleotide sequence ID" value="XM_063281280.1"/>
</dbReference>
<dbReference type="RefSeq" id="XP_063137356.1">
    <property type="nucleotide sequence ID" value="XM_063281286.1"/>
</dbReference>
<dbReference type="SMR" id="P52873"/>
<dbReference type="BioGRID" id="247176">
    <property type="interactions" value="6"/>
</dbReference>
<dbReference type="FunCoup" id="P52873">
    <property type="interactions" value="1406"/>
</dbReference>
<dbReference type="IntAct" id="P52873">
    <property type="interactions" value="3"/>
</dbReference>
<dbReference type="MINT" id="P52873"/>
<dbReference type="STRING" id="10116.ENSRNOP00000068757"/>
<dbReference type="CarbonylDB" id="P52873"/>
<dbReference type="GlyGen" id="P52873">
    <property type="glycosylation" value="2 sites, 1 O-linked glycan (1 site)"/>
</dbReference>
<dbReference type="iPTMnet" id="P52873"/>
<dbReference type="PhosphoSitePlus" id="P52873"/>
<dbReference type="jPOST" id="P52873"/>
<dbReference type="PaxDb" id="10116-ENSRNOP00000026316"/>
<dbReference type="GeneID" id="25104"/>
<dbReference type="KEGG" id="rno:25104"/>
<dbReference type="UCSC" id="RGD:3262">
    <property type="organism name" value="rat"/>
</dbReference>
<dbReference type="AGR" id="RGD:3262"/>
<dbReference type="CTD" id="5091"/>
<dbReference type="RGD" id="3262">
    <property type="gene designation" value="Pc"/>
</dbReference>
<dbReference type="VEuPathDB" id="HostDB:ENSRNOG00000019372"/>
<dbReference type="eggNOG" id="KOG0369">
    <property type="taxonomic scope" value="Eukaryota"/>
</dbReference>
<dbReference type="HOGENOM" id="CLU_000395_1_0_1"/>
<dbReference type="InParanoid" id="P52873"/>
<dbReference type="OrthoDB" id="196847at2759"/>
<dbReference type="PhylomeDB" id="P52873"/>
<dbReference type="TreeFam" id="TF300535"/>
<dbReference type="BRENDA" id="6.4.1.1">
    <property type="organism ID" value="5301"/>
</dbReference>
<dbReference type="Reactome" id="R-RNO-196780">
    <property type="pathway name" value="Biotin transport and metabolism"/>
</dbReference>
<dbReference type="Reactome" id="R-RNO-70263">
    <property type="pathway name" value="Gluconeogenesis"/>
</dbReference>
<dbReference type="Reactome" id="R-RNO-70268">
    <property type="pathway name" value="Pyruvate metabolism"/>
</dbReference>
<dbReference type="UniPathway" id="UPA00138"/>
<dbReference type="PRO" id="PR:P52873"/>
<dbReference type="Proteomes" id="UP000002494">
    <property type="component" value="Chromosome 1"/>
</dbReference>
<dbReference type="Bgee" id="ENSRNOG00000019372">
    <property type="expression patterns" value="Expressed in adult mammalian kidney and 19 other cell types or tissues"/>
</dbReference>
<dbReference type="ExpressionAtlas" id="P52873">
    <property type="expression patterns" value="baseline and differential"/>
</dbReference>
<dbReference type="GO" id="GO:0005737">
    <property type="term" value="C:cytoplasm"/>
    <property type="evidence" value="ECO:0000266"/>
    <property type="project" value="RGD"/>
</dbReference>
<dbReference type="GO" id="GO:0005759">
    <property type="term" value="C:mitochondrial matrix"/>
    <property type="evidence" value="ECO:0000266"/>
    <property type="project" value="RGD"/>
</dbReference>
<dbReference type="GO" id="GO:0005739">
    <property type="term" value="C:mitochondrion"/>
    <property type="evidence" value="ECO:0000266"/>
    <property type="project" value="RGD"/>
</dbReference>
<dbReference type="GO" id="GO:0005524">
    <property type="term" value="F:ATP binding"/>
    <property type="evidence" value="ECO:0000314"/>
    <property type="project" value="RGD"/>
</dbReference>
<dbReference type="GO" id="GO:0009374">
    <property type="term" value="F:biotin binding"/>
    <property type="evidence" value="ECO:0000314"/>
    <property type="project" value="RGD"/>
</dbReference>
<dbReference type="GO" id="GO:0042802">
    <property type="term" value="F:identical protein binding"/>
    <property type="evidence" value="ECO:0000266"/>
    <property type="project" value="RGD"/>
</dbReference>
<dbReference type="GO" id="GO:0046872">
    <property type="term" value="F:metal ion binding"/>
    <property type="evidence" value="ECO:0007669"/>
    <property type="project" value="UniProtKB-KW"/>
</dbReference>
<dbReference type="GO" id="GO:0004736">
    <property type="term" value="F:pyruvate carboxylase activity"/>
    <property type="evidence" value="ECO:0000314"/>
    <property type="project" value="RGD"/>
</dbReference>
<dbReference type="GO" id="GO:0006094">
    <property type="term" value="P:gluconeogenesis"/>
    <property type="evidence" value="ECO:0000314"/>
    <property type="project" value="RGD"/>
</dbReference>
<dbReference type="GO" id="GO:0006629">
    <property type="term" value="P:lipid metabolic process"/>
    <property type="evidence" value="ECO:0007669"/>
    <property type="project" value="UniProtKB-KW"/>
</dbReference>
<dbReference type="GO" id="GO:0006734">
    <property type="term" value="P:NADH metabolic process"/>
    <property type="evidence" value="ECO:0000266"/>
    <property type="project" value="RGD"/>
</dbReference>
<dbReference type="GO" id="GO:0006739">
    <property type="term" value="P:NADP metabolic process"/>
    <property type="evidence" value="ECO:0000266"/>
    <property type="project" value="RGD"/>
</dbReference>
<dbReference type="GO" id="GO:0010629">
    <property type="term" value="P:negative regulation of gene expression"/>
    <property type="evidence" value="ECO:0000266"/>
    <property type="project" value="RGD"/>
</dbReference>
<dbReference type="GO" id="GO:0006107">
    <property type="term" value="P:oxaloacetate metabolic process"/>
    <property type="evidence" value="ECO:0000314"/>
    <property type="project" value="RGD"/>
</dbReference>
<dbReference type="GO" id="GO:0044794">
    <property type="term" value="P:positive regulation by host of viral process"/>
    <property type="evidence" value="ECO:0000266"/>
    <property type="project" value="RGD"/>
</dbReference>
<dbReference type="GO" id="GO:0071073">
    <property type="term" value="P:positive regulation of phospholipid biosynthetic process"/>
    <property type="evidence" value="ECO:0000315"/>
    <property type="project" value="CACAO"/>
</dbReference>
<dbReference type="GO" id="GO:0006090">
    <property type="term" value="P:pyruvate metabolic process"/>
    <property type="evidence" value="ECO:0000314"/>
    <property type="project" value="RGD"/>
</dbReference>
<dbReference type="GO" id="GO:0019076">
    <property type="term" value="P:viral release from host cell"/>
    <property type="evidence" value="ECO:0000266"/>
    <property type="project" value="RGD"/>
</dbReference>
<dbReference type="GO" id="GO:0019074">
    <property type="term" value="P:viral RNA genome packaging"/>
    <property type="evidence" value="ECO:0000266"/>
    <property type="project" value="RGD"/>
</dbReference>
<dbReference type="CDD" id="cd06850">
    <property type="entry name" value="biotinyl_domain"/>
    <property type="match status" value="1"/>
</dbReference>
<dbReference type="CDD" id="cd07937">
    <property type="entry name" value="DRE_TIM_PC_TC_5S"/>
    <property type="match status" value="1"/>
</dbReference>
<dbReference type="FunFam" id="2.40.50.100:FF:000003">
    <property type="entry name" value="Acetyl-CoA carboxylase biotin carboxyl carrier protein"/>
    <property type="match status" value="1"/>
</dbReference>
<dbReference type="FunFam" id="3.30.1490.20:FF:000018">
    <property type="entry name" value="Biotin carboxylase"/>
    <property type="match status" value="1"/>
</dbReference>
<dbReference type="FunFam" id="3.40.50.20:FF:000010">
    <property type="entry name" value="Propionyl-CoA carboxylase subunit alpha"/>
    <property type="match status" value="1"/>
</dbReference>
<dbReference type="FunFam" id="3.10.600.10:FF:000001">
    <property type="entry name" value="Pyruvate carboxylase"/>
    <property type="match status" value="1"/>
</dbReference>
<dbReference type="FunFam" id="3.20.20.70:FF:000033">
    <property type="entry name" value="Pyruvate carboxylase"/>
    <property type="match status" value="1"/>
</dbReference>
<dbReference type="FunFam" id="3.30.470.20:FF:000012">
    <property type="entry name" value="Pyruvate carboxylase"/>
    <property type="match status" value="1"/>
</dbReference>
<dbReference type="FunFam" id="1.10.10.60:FF:000512">
    <property type="entry name" value="Pyruvate carboxylase, mitochondrial"/>
    <property type="match status" value="1"/>
</dbReference>
<dbReference type="Gene3D" id="2.40.50.100">
    <property type="match status" value="1"/>
</dbReference>
<dbReference type="Gene3D" id="3.40.50.20">
    <property type="match status" value="1"/>
</dbReference>
<dbReference type="Gene3D" id="3.20.20.70">
    <property type="entry name" value="Aldolase class I"/>
    <property type="match status" value="1"/>
</dbReference>
<dbReference type="Gene3D" id="3.30.1490.20">
    <property type="entry name" value="ATP-grasp fold, A domain"/>
    <property type="match status" value="1"/>
</dbReference>
<dbReference type="Gene3D" id="3.30.470.20">
    <property type="entry name" value="ATP-grasp fold, B domain"/>
    <property type="match status" value="1"/>
</dbReference>
<dbReference type="Gene3D" id="3.10.600.10">
    <property type="entry name" value="pyruvate carboxylase f1077a mutant domain"/>
    <property type="match status" value="1"/>
</dbReference>
<dbReference type="InterPro" id="IPR013785">
    <property type="entry name" value="Aldolase_TIM"/>
</dbReference>
<dbReference type="InterPro" id="IPR011761">
    <property type="entry name" value="ATP-grasp"/>
</dbReference>
<dbReference type="InterPro" id="IPR013815">
    <property type="entry name" value="ATP_grasp_subdomain_1"/>
</dbReference>
<dbReference type="InterPro" id="IPR005481">
    <property type="entry name" value="BC-like_N"/>
</dbReference>
<dbReference type="InterPro" id="IPR001882">
    <property type="entry name" value="Biotin_BS"/>
</dbReference>
<dbReference type="InterPro" id="IPR011764">
    <property type="entry name" value="Biotin_carboxylation_dom"/>
</dbReference>
<dbReference type="InterPro" id="IPR005482">
    <property type="entry name" value="Biotin_COase_C"/>
</dbReference>
<dbReference type="InterPro" id="IPR000089">
    <property type="entry name" value="Biotin_lipoyl"/>
</dbReference>
<dbReference type="InterPro" id="IPR003379">
    <property type="entry name" value="Carboxylase_cons_dom"/>
</dbReference>
<dbReference type="InterPro" id="IPR005479">
    <property type="entry name" value="CbamoylP_synth_lsu-like_ATP-bd"/>
</dbReference>
<dbReference type="InterPro" id="IPR055268">
    <property type="entry name" value="PCB-like"/>
</dbReference>
<dbReference type="InterPro" id="IPR016185">
    <property type="entry name" value="PreATP-grasp_dom_sf"/>
</dbReference>
<dbReference type="InterPro" id="IPR000891">
    <property type="entry name" value="PYR_CT"/>
</dbReference>
<dbReference type="InterPro" id="IPR005930">
    <property type="entry name" value="Pyruv_COase"/>
</dbReference>
<dbReference type="InterPro" id="IPR011054">
    <property type="entry name" value="Rudment_hybrid_motif"/>
</dbReference>
<dbReference type="InterPro" id="IPR011053">
    <property type="entry name" value="Single_hybrid_motif"/>
</dbReference>
<dbReference type="NCBIfam" id="NF006761">
    <property type="entry name" value="PRK09282.1"/>
    <property type="match status" value="1"/>
</dbReference>
<dbReference type="NCBIfam" id="NF009554">
    <property type="entry name" value="PRK12999.1"/>
    <property type="match status" value="1"/>
</dbReference>
<dbReference type="NCBIfam" id="TIGR01235">
    <property type="entry name" value="pyruv_carbox"/>
    <property type="match status" value="1"/>
</dbReference>
<dbReference type="PANTHER" id="PTHR43778">
    <property type="entry name" value="PYRUVATE CARBOXYLASE"/>
    <property type="match status" value="1"/>
</dbReference>
<dbReference type="PANTHER" id="PTHR43778:SF2">
    <property type="entry name" value="PYRUVATE CARBOXYLASE, MITOCHONDRIAL"/>
    <property type="match status" value="1"/>
</dbReference>
<dbReference type="Pfam" id="PF02785">
    <property type="entry name" value="Biotin_carb_C"/>
    <property type="match status" value="1"/>
</dbReference>
<dbReference type="Pfam" id="PF00289">
    <property type="entry name" value="Biotin_carb_N"/>
    <property type="match status" value="1"/>
</dbReference>
<dbReference type="Pfam" id="PF00364">
    <property type="entry name" value="Biotin_lipoyl"/>
    <property type="match status" value="1"/>
</dbReference>
<dbReference type="Pfam" id="PF02786">
    <property type="entry name" value="CPSase_L_D2"/>
    <property type="match status" value="1"/>
</dbReference>
<dbReference type="Pfam" id="PF00682">
    <property type="entry name" value="HMGL-like"/>
    <property type="match status" value="1"/>
</dbReference>
<dbReference type="Pfam" id="PF02436">
    <property type="entry name" value="PYC_OADA"/>
    <property type="match status" value="1"/>
</dbReference>
<dbReference type="PIRSF" id="PIRSF001594">
    <property type="entry name" value="Pyruv_carbox"/>
    <property type="match status" value="1"/>
</dbReference>
<dbReference type="SMART" id="SM00878">
    <property type="entry name" value="Biotin_carb_C"/>
    <property type="match status" value="1"/>
</dbReference>
<dbReference type="SUPFAM" id="SSF51569">
    <property type="entry name" value="Aldolase"/>
    <property type="match status" value="1"/>
</dbReference>
<dbReference type="SUPFAM" id="SSF56059">
    <property type="entry name" value="Glutathione synthetase ATP-binding domain-like"/>
    <property type="match status" value="1"/>
</dbReference>
<dbReference type="SUPFAM" id="SSF89000">
    <property type="entry name" value="post-HMGL domain-like"/>
    <property type="match status" value="1"/>
</dbReference>
<dbReference type="SUPFAM" id="SSF52440">
    <property type="entry name" value="PreATP-grasp domain"/>
    <property type="match status" value="1"/>
</dbReference>
<dbReference type="SUPFAM" id="SSF51246">
    <property type="entry name" value="Rudiment single hybrid motif"/>
    <property type="match status" value="1"/>
</dbReference>
<dbReference type="SUPFAM" id="SSF51230">
    <property type="entry name" value="Single hybrid motif"/>
    <property type="match status" value="1"/>
</dbReference>
<dbReference type="PROSITE" id="PS50975">
    <property type="entry name" value="ATP_GRASP"/>
    <property type="match status" value="1"/>
</dbReference>
<dbReference type="PROSITE" id="PS50979">
    <property type="entry name" value="BC"/>
    <property type="match status" value="1"/>
</dbReference>
<dbReference type="PROSITE" id="PS00188">
    <property type="entry name" value="BIOTIN"/>
    <property type="match status" value="1"/>
</dbReference>
<dbReference type="PROSITE" id="PS50968">
    <property type="entry name" value="BIOTINYL_LIPOYL"/>
    <property type="match status" value="1"/>
</dbReference>
<dbReference type="PROSITE" id="PS50991">
    <property type="entry name" value="PYR_CT"/>
    <property type="match status" value="1"/>
</dbReference>
<evidence type="ECO:0000250" key="1"/>
<evidence type="ECO:0000250" key="2">
    <source>
        <dbReference type="UniProtKB" id="P11498"/>
    </source>
</evidence>
<evidence type="ECO:0000250" key="3">
    <source>
        <dbReference type="UniProtKB" id="Q05920"/>
    </source>
</evidence>
<evidence type="ECO:0000255" key="4"/>
<evidence type="ECO:0000255" key="5">
    <source>
        <dbReference type="PROSITE-ProRule" id="PRU00409"/>
    </source>
</evidence>
<evidence type="ECO:0000255" key="6">
    <source>
        <dbReference type="PROSITE-ProRule" id="PRU01066"/>
    </source>
</evidence>
<evidence type="ECO:0000255" key="7">
    <source>
        <dbReference type="PROSITE-ProRule" id="PRU01151"/>
    </source>
</evidence>
<evidence type="ECO:0000305" key="8"/>
<evidence type="ECO:0007744" key="9">
    <source>
    </source>
</evidence>
<sequence length="1178" mass="129777">MLKFQTVRGGLRLLGVRRSSTAPVASPNVRRLEYKPIKKVMVANRGEIAIRVFRACTELGIRTVAVYSEQDTGQMHRQKADEAYLIGRGLAPVQAYLHIPDIIKVAKENGVDAVHPGYGFLSERADFAQACQDAGVRFIGPSPEVVRKMGDKVEARAIAIAAGVPVVPGTNSPINSLHEAHEFSNTYGFPIIFKAAYGGGGRGMRVVHSYEELEENYTRAYSEALAAFGNGALFVEKFIEKPRHIEVQILGDQYGNILHLYERDCSIQRRHQKVVEIAPATHLDPQLRSRLTSDSVKLAKQVGYENAGTVEFLVDKHGKHYFIEVNSRLQVEHTVTEEITDVDLVHAQIHVSEGRSLPDLGLRQENIRINGCAIQCRVTTEDPARSFQPDTGRIEVFRSGEGMGIRLDNASAFQGAVISPHYDSLLVKVIAHGKDHPTAATKMSRALAEFRVRGVKTNIPFLQNVLNNQQFLAGIVDTQFIDENPELFQLRPAQNRAQKLLHYLGHVMVNGPTTPIPVKVSPSPVDPIVPVVPIGPPPAGFRDILLREGPEGFARAVRNHQGLLLMDTTFRDAHQSLLATRVRTHDLKKIAPYVAHNFNNLFSIENWGGATFDVAMRFLYECPWRRLQELRELIPNIPFQMLLRGANAVGYTNYPDNVVFKFCEVAKENGMDVFRIFDSLNYLPNMLLGMEAAGSAGGVVEAAISYTGDVADPSRTKYSLEYYMGLAEELVRAGTHILCIKDMAGLLKPAACTMLVSSLRDRFPDLPLHIHTHDTSGSGVAAMLACAQAGADVVDVAVDSMSGMTSQPSMGALVACTKGTPLDTEVPLERVFDYSEYWEGARGLYAAFDCTATMKSGNSDVYENEIPGGQYTNLHFQAHSMGLGSKFKEVKKAYVEANQMLGDLIKVTPSSKIVGDLAQFMVQNGLSRAEAEAQAEELSFPRSVVEFLQGYIGIPHGGFPEPFRSKVLKDLPRIEGRPGASLPPLNLKELEKDLIDRHGEEVTPEDVLSAAMYPDVFAQFKDFTATFGPLDSLNTRLFLQGPKIAEEFEVELERGKTLHIKALAVSDLNRAGQRQVFFELNGQLRSILVKDTQAMKEMHFHPKALKDVKGQIGAPMPGKVIDVKVAAGAKVVKGQPLCVLSAMKMETVVTSPMEGTIRKVHVTKDMTLEGDDLILEIE</sequence>